<proteinExistence type="inferred from homology"/>
<feature type="chain" id="PRO_1000073666" description="Tyrosine recombinase XerC">
    <location>
        <begin position="1"/>
        <end position="305"/>
    </location>
</feature>
<feature type="domain" description="Core-binding (CB)" evidence="3">
    <location>
        <begin position="2"/>
        <end position="88"/>
    </location>
</feature>
<feature type="domain" description="Tyr recombinase" evidence="2">
    <location>
        <begin position="109"/>
        <end position="295"/>
    </location>
</feature>
<feature type="active site" evidence="1">
    <location>
        <position position="149"/>
    </location>
</feature>
<feature type="active site" evidence="1">
    <location>
        <position position="173"/>
    </location>
</feature>
<feature type="active site" evidence="1">
    <location>
        <position position="247"/>
    </location>
</feature>
<feature type="active site" evidence="1">
    <location>
        <position position="250"/>
    </location>
</feature>
<feature type="active site" evidence="1">
    <location>
        <position position="273"/>
    </location>
</feature>
<feature type="active site" description="O-(3'-phospho-DNA)-tyrosine intermediate" evidence="1">
    <location>
        <position position="282"/>
    </location>
</feature>
<name>XERC_BACP2</name>
<organism>
    <name type="scientific">Bacillus pumilus (strain SAFR-032)</name>
    <dbReference type="NCBI Taxonomy" id="315750"/>
    <lineage>
        <taxon>Bacteria</taxon>
        <taxon>Bacillati</taxon>
        <taxon>Bacillota</taxon>
        <taxon>Bacilli</taxon>
        <taxon>Bacillales</taxon>
        <taxon>Bacillaceae</taxon>
        <taxon>Bacillus</taxon>
    </lineage>
</organism>
<sequence>MTNKQRLVHLFIEYLQIEKNYSALTISGYTEAIEEFVRFMNVQGIDGFEEVSYQDTRIYLTEAYEKGLTRRTISKKVSALRSFYKFLLREQLVKENPFLLVSLPKQDKRIPSFLYEEELKELFTVSDVSTPLGQRNQAILELLYATGMRVSELCSLKESDLDLSMDTVLVHGKGSKQRYVPFGSYAHEALITYLEDGRLKLKAKGKDRADAYVFLNQRGAPLTDRGVRFILTELMKKASGTLHIHPHMLRHTFATHLLNEGADLRSVQELLGHSNLSSTQVYTHVSKDSLRKTYMSHHPRAFKRS</sequence>
<gene>
    <name evidence="1" type="primary">xerC</name>
    <name type="ordered locus">BPUM_1512</name>
</gene>
<reference key="1">
    <citation type="journal article" date="2007" name="PLoS ONE">
        <title>Paradoxical DNA repair and peroxide resistance gene conservation in Bacillus pumilus SAFR-032.</title>
        <authorList>
            <person name="Gioia J."/>
            <person name="Yerrapragada S."/>
            <person name="Qin X."/>
            <person name="Jiang H."/>
            <person name="Igboeli O.C."/>
            <person name="Muzny D."/>
            <person name="Dugan-Rocha S."/>
            <person name="Ding Y."/>
            <person name="Hawes A."/>
            <person name="Liu W."/>
            <person name="Perez L."/>
            <person name="Kovar C."/>
            <person name="Dinh H."/>
            <person name="Lee S."/>
            <person name="Nazareth L."/>
            <person name="Blyth P."/>
            <person name="Holder M."/>
            <person name="Buhay C."/>
            <person name="Tirumalai M.R."/>
            <person name="Liu Y."/>
            <person name="Dasgupta I."/>
            <person name="Bokhetache L."/>
            <person name="Fujita M."/>
            <person name="Karouia F."/>
            <person name="Eswara Moorthy P."/>
            <person name="Siefert J."/>
            <person name="Uzman A."/>
            <person name="Buzumbo P."/>
            <person name="Verma A."/>
            <person name="Zwiya H."/>
            <person name="McWilliams B.D."/>
            <person name="Olowu A."/>
            <person name="Clinkenbeard K.D."/>
            <person name="Newcombe D."/>
            <person name="Golebiewski L."/>
            <person name="Petrosino J.F."/>
            <person name="Nicholson W.L."/>
            <person name="Fox G.E."/>
            <person name="Venkateswaran K."/>
            <person name="Highlander S.K."/>
            <person name="Weinstock G.M."/>
        </authorList>
    </citation>
    <scope>NUCLEOTIDE SEQUENCE [LARGE SCALE GENOMIC DNA]</scope>
    <source>
        <strain>SAFR-032</strain>
    </source>
</reference>
<protein>
    <recommendedName>
        <fullName evidence="1">Tyrosine recombinase XerC</fullName>
    </recommendedName>
</protein>
<dbReference type="EMBL" id="CP000813">
    <property type="protein sequence ID" value="ABV62195.1"/>
    <property type="molecule type" value="Genomic_DNA"/>
</dbReference>
<dbReference type="RefSeq" id="WP_012009949.1">
    <property type="nucleotide sequence ID" value="NZ_VEAS01000002.1"/>
</dbReference>
<dbReference type="SMR" id="A8FD78"/>
<dbReference type="STRING" id="315750.BPUM_1512"/>
<dbReference type="GeneID" id="5620775"/>
<dbReference type="KEGG" id="bpu:BPUM_1512"/>
<dbReference type="eggNOG" id="COG4974">
    <property type="taxonomic scope" value="Bacteria"/>
</dbReference>
<dbReference type="HOGENOM" id="CLU_027562_9_0_9"/>
<dbReference type="OrthoDB" id="9801717at2"/>
<dbReference type="Proteomes" id="UP000001355">
    <property type="component" value="Chromosome"/>
</dbReference>
<dbReference type="GO" id="GO:0005737">
    <property type="term" value="C:cytoplasm"/>
    <property type="evidence" value="ECO:0007669"/>
    <property type="project" value="UniProtKB-SubCell"/>
</dbReference>
<dbReference type="GO" id="GO:0003677">
    <property type="term" value="F:DNA binding"/>
    <property type="evidence" value="ECO:0007669"/>
    <property type="project" value="UniProtKB-KW"/>
</dbReference>
<dbReference type="GO" id="GO:0009037">
    <property type="term" value="F:tyrosine-based site-specific recombinase activity"/>
    <property type="evidence" value="ECO:0007669"/>
    <property type="project" value="UniProtKB-UniRule"/>
</dbReference>
<dbReference type="GO" id="GO:0051301">
    <property type="term" value="P:cell division"/>
    <property type="evidence" value="ECO:0007669"/>
    <property type="project" value="UniProtKB-KW"/>
</dbReference>
<dbReference type="GO" id="GO:0007059">
    <property type="term" value="P:chromosome segregation"/>
    <property type="evidence" value="ECO:0007669"/>
    <property type="project" value="UniProtKB-UniRule"/>
</dbReference>
<dbReference type="GO" id="GO:0006313">
    <property type="term" value="P:DNA transposition"/>
    <property type="evidence" value="ECO:0007669"/>
    <property type="project" value="UniProtKB-UniRule"/>
</dbReference>
<dbReference type="CDD" id="cd00798">
    <property type="entry name" value="INT_XerDC_C"/>
    <property type="match status" value="1"/>
</dbReference>
<dbReference type="Gene3D" id="1.10.150.130">
    <property type="match status" value="1"/>
</dbReference>
<dbReference type="Gene3D" id="1.10.443.10">
    <property type="entry name" value="Intergrase catalytic core"/>
    <property type="match status" value="1"/>
</dbReference>
<dbReference type="HAMAP" id="MF_01808">
    <property type="entry name" value="Recomb_XerC_XerD"/>
    <property type="match status" value="1"/>
</dbReference>
<dbReference type="InterPro" id="IPR044068">
    <property type="entry name" value="CB"/>
</dbReference>
<dbReference type="InterPro" id="IPR011010">
    <property type="entry name" value="DNA_brk_join_enz"/>
</dbReference>
<dbReference type="InterPro" id="IPR013762">
    <property type="entry name" value="Integrase-like_cat_sf"/>
</dbReference>
<dbReference type="InterPro" id="IPR002104">
    <property type="entry name" value="Integrase_catalytic"/>
</dbReference>
<dbReference type="InterPro" id="IPR010998">
    <property type="entry name" value="Integrase_recombinase_N"/>
</dbReference>
<dbReference type="InterPro" id="IPR004107">
    <property type="entry name" value="Integrase_SAM-like_N"/>
</dbReference>
<dbReference type="InterPro" id="IPR011931">
    <property type="entry name" value="Recomb_XerC"/>
</dbReference>
<dbReference type="InterPro" id="IPR023009">
    <property type="entry name" value="Tyrosine_recombinase_XerC/XerD"/>
</dbReference>
<dbReference type="InterPro" id="IPR050090">
    <property type="entry name" value="Tyrosine_recombinase_XerCD"/>
</dbReference>
<dbReference type="NCBIfam" id="NF001399">
    <property type="entry name" value="PRK00283.1"/>
    <property type="match status" value="1"/>
</dbReference>
<dbReference type="NCBIfam" id="NF040815">
    <property type="entry name" value="recomb_XerA_Arch"/>
    <property type="match status" value="1"/>
</dbReference>
<dbReference type="NCBIfam" id="TIGR02224">
    <property type="entry name" value="recomb_XerC"/>
    <property type="match status" value="1"/>
</dbReference>
<dbReference type="PANTHER" id="PTHR30349">
    <property type="entry name" value="PHAGE INTEGRASE-RELATED"/>
    <property type="match status" value="1"/>
</dbReference>
<dbReference type="PANTHER" id="PTHR30349:SF77">
    <property type="entry name" value="TYROSINE RECOMBINASE XERC"/>
    <property type="match status" value="1"/>
</dbReference>
<dbReference type="Pfam" id="PF02899">
    <property type="entry name" value="Phage_int_SAM_1"/>
    <property type="match status" value="1"/>
</dbReference>
<dbReference type="Pfam" id="PF00589">
    <property type="entry name" value="Phage_integrase"/>
    <property type="match status" value="1"/>
</dbReference>
<dbReference type="SUPFAM" id="SSF56349">
    <property type="entry name" value="DNA breaking-rejoining enzymes"/>
    <property type="match status" value="1"/>
</dbReference>
<dbReference type="PROSITE" id="PS51900">
    <property type="entry name" value="CB"/>
    <property type="match status" value="1"/>
</dbReference>
<dbReference type="PROSITE" id="PS51898">
    <property type="entry name" value="TYR_RECOMBINASE"/>
    <property type="match status" value="1"/>
</dbReference>
<accession>A8FD78</accession>
<comment type="function">
    <text evidence="1">Site-specific tyrosine recombinase, which acts by catalyzing the cutting and rejoining of the recombining DNA molecules. The XerC-XerD complex is essential to convert dimers of the bacterial chromosome into monomers to permit their segregation at cell division. It also contributes to the segregational stability of plasmids.</text>
</comment>
<comment type="subunit">
    <text evidence="1">Forms a cyclic heterotetrameric complex composed of two molecules of XerC and two molecules of XerD.</text>
</comment>
<comment type="subcellular location">
    <subcellularLocation>
        <location evidence="1">Cytoplasm</location>
    </subcellularLocation>
</comment>
<comment type="similarity">
    <text evidence="1">Belongs to the 'phage' integrase family. XerC subfamily.</text>
</comment>
<keyword id="KW-0131">Cell cycle</keyword>
<keyword id="KW-0132">Cell division</keyword>
<keyword id="KW-0159">Chromosome partition</keyword>
<keyword id="KW-0963">Cytoplasm</keyword>
<keyword id="KW-0229">DNA integration</keyword>
<keyword id="KW-0233">DNA recombination</keyword>
<keyword id="KW-0238">DNA-binding</keyword>
<evidence type="ECO:0000255" key="1">
    <source>
        <dbReference type="HAMAP-Rule" id="MF_01808"/>
    </source>
</evidence>
<evidence type="ECO:0000255" key="2">
    <source>
        <dbReference type="PROSITE-ProRule" id="PRU01246"/>
    </source>
</evidence>
<evidence type="ECO:0000255" key="3">
    <source>
        <dbReference type="PROSITE-ProRule" id="PRU01248"/>
    </source>
</evidence>